<keyword id="KW-0963">Cytoplasm</keyword>
<keyword id="KW-0539">Nucleus</keyword>
<keyword id="KW-1185">Reference proteome</keyword>
<keyword id="KW-0736">Signalosome</keyword>
<sequence>MDLPPLSLDQLSAVITAGPTPTDLYTSLSAYEEQACLLSATDPSEKDLLLEFYTAFFFSHLLTDQICEARALTRRIPREISRLDAMQTCSLLLRAVWQSKHTEIYKILRELPWPGRSQPLVQRYESYFQEKTLVEMSNSYETIRIAAAATYLGLDPAAVEGDIIEKFTACGWKWDSEKQLLHPKPVVTAPPKDDSLQNELSRVMALISNQGS</sequence>
<evidence type="ECO:0000250" key="1"/>
<evidence type="ECO:0000255" key="2">
    <source>
        <dbReference type="PROSITE-ProRule" id="PRU01185"/>
    </source>
</evidence>
<evidence type="ECO:0000269" key="3">
    <source>
    </source>
</evidence>
<evidence type="ECO:0000305" key="4"/>
<organism>
    <name type="scientific">Emericella nidulans (strain FGSC A4 / ATCC 38163 / CBS 112.46 / NRRL 194 / M139)</name>
    <name type="common">Aspergillus nidulans</name>
    <dbReference type="NCBI Taxonomy" id="227321"/>
    <lineage>
        <taxon>Eukaryota</taxon>
        <taxon>Fungi</taxon>
        <taxon>Dikarya</taxon>
        <taxon>Ascomycota</taxon>
        <taxon>Pezizomycotina</taxon>
        <taxon>Eurotiomycetes</taxon>
        <taxon>Eurotiomycetidae</taxon>
        <taxon>Eurotiales</taxon>
        <taxon>Aspergillaceae</taxon>
        <taxon>Aspergillus</taxon>
        <taxon>Aspergillus subgen. Nidulantes</taxon>
    </lineage>
</organism>
<gene>
    <name type="primary">csnH</name>
    <name type="synonym">csn8</name>
    <name type="ORF">AN10208</name>
</gene>
<proteinExistence type="evidence at protein level"/>
<dbReference type="EMBL" id="AACD01000022">
    <property type="status" value="NOT_ANNOTATED_CDS"/>
    <property type="molecule type" value="Genomic_DNA"/>
</dbReference>
<dbReference type="EMBL" id="BN001307">
    <property type="protein sequence ID" value="CBF84891.1"/>
    <property type="molecule type" value="Genomic_DNA"/>
</dbReference>
<dbReference type="SMR" id="P0C624"/>
<dbReference type="DIP" id="DIP-60932N"/>
<dbReference type="IntAct" id="P0C624">
    <property type="interactions" value="1"/>
</dbReference>
<dbReference type="STRING" id="227321.P0C624"/>
<dbReference type="EnsemblFungi" id="CBF84891">
    <property type="protein sequence ID" value="CBF84891"/>
    <property type="gene ID" value="ANIA_10208"/>
</dbReference>
<dbReference type="eggNOG" id="ENOG502SG50">
    <property type="taxonomic scope" value="Eukaryota"/>
</dbReference>
<dbReference type="HOGENOM" id="CLU_108986_0_0_1"/>
<dbReference type="InParanoid" id="P0C624"/>
<dbReference type="OMA" id="LRAVWQT"/>
<dbReference type="OrthoDB" id="5351233at2759"/>
<dbReference type="Proteomes" id="UP000000560">
    <property type="component" value="Chromosome VII"/>
</dbReference>
<dbReference type="GO" id="GO:0008180">
    <property type="term" value="C:COP9 signalosome"/>
    <property type="evidence" value="ECO:0000318"/>
    <property type="project" value="GO_Central"/>
</dbReference>
<dbReference type="GO" id="GO:0005737">
    <property type="term" value="C:cytoplasm"/>
    <property type="evidence" value="ECO:0007669"/>
    <property type="project" value="UniProtKB-SubCell"/>
</dbReference>
<dbReference type="GO" id="GO:0010387">
    <property type="term" value="P:COP9 signalosome assembly"/>
    <property type="evidence" value="ECO:0007669"/>
    <property type="project" value="InterPro"/>
</dbReference>
<dbReference type="GO" id="GO:0000338">
    <property type="term" value="P:protein deneddylation"/>
    <property type="evidence" value="ECO:0007669"/>
    <property type="project" value="InterPro"/>
</dbReference>
<dbReference type="InterPro" id="IPR033205">
    <property type="entry name" value="COP9_CSN8"/>
</dbReference>
<dbReference type="InterPro" id="IPR033464">
    <property type="entry name" value="CSN8_PSD8_EIF3K"/>
</dbReference>
<dbReference type="InterPro" id="IPR000717">
    <property type="entry name" value="PCI_dom"/>
</dbReference>
<dbReference type="PANTHER" id="PTHR13339">
    <property type="entry name" value="COP9 SIGNALOSOME COMPLEX SUBUNIT 8"/>
    <property type="match status" value="1"/>
</dbReference>
<dbReference type="PANTHER" id="PTHR13339:SF0">
    <property type="entry name" value="COP9 SIGNALOSOME COMPLEX SUBUNIT 8"/>
    <property type="match status" value="1"/>
</dbReference>
<dbReference type="Pfam" id="PF10075">
    <property type="entry name" value="CSN8_PSD8_EIF3K"/>
    <property type="match status" value="1"/>
</dbReference>
<dbReference type="PROSITE" id="PS50250">
    <property type="entry name" value="PCI"/>
    <property type="match status" value="1"/>
</dbReference>
<feature type="chain" id="PRO_0000314746" description="COP9 signalosome complex subunit 8">
    <location>
        <begin position="1"/>
        <end position="212"/>
    </location>
</feature>
<feature type="domain" description="PCI" evidence="2">
    <location>
        <begin position="26"/>
        <end position="193"/>
    </location>
</feature>
<comment type="function">
    <text evidence="1">Component of the COP9 signalosome (CSN) complex that acts as an regulator of the ubiquitin (Ubl) conjugation pathway by mediating the deneddylation of the cullin subunit of SCF-type E3 ubiquitin-protein ligase complexes (By similarity). The CSN complex seems to link protein degradation to sexual development.</text>
</comment>
<comment type="subunit">
    <text evidence="3">Component of the COP9 signalosome (CSN) complex.</text>
</comment>
<comment type="subcellular location">
    <subcellularLocation>
        <location evidence="1">Cytoplasm</location>
    </subcellularLocation>
    <subcellularLocation>
        <location evidence="1">Nucleus</location>
    </subcellularLocation>
</comment>
<comment type="similarity">
    <text evidence="4">Belongs to the CSN8 family.</text>
</comment>
<comment type="sequence caution" evidence="4">
    <conflict type="frameshift">
        <sequence resource="EMBL" id="AACD01000022"/>
    </conflict>
</comment>
<protein>
    <recommendedName>
        <fullName>COP9 signalosome complex subunit 8</fullName>
        <shortName>CSN complex subunit 8</shortName>
    </recommendedName>
</protein>
<reference key="1">
    <citation type="journal article" date="2005" name="Nature">
        <title>Sequencing of Aspergillus nidulans and comparative analysis with A. fumigatus and A. oryzae.</title>
        <authorList>
            <person name="Galagan J.E."/>
            <person name="Calvo S.E."/>
            <person name="Cuomo C."/>
            <person name="Ma L.-J."/>
            <person name="Wortman J.R."/>
            <person name="Batzoglou S."/>
            <person name="Lee S.-I."/>
            <person name="Bastuerkmen M."/>
            <person name="Spevak C.C."/>
            <person name="Clutterbuck J."/>
            <person name="Kapitonov V."/>
            <person name="Jurka J."/>
            <person name="Scazzocchio C."/>
            <person name="Farman M.L."/>
            <person name="Butler J."/>
            <person name="Purcell S."/>
            <person name="Harris S."/>
            <person name="Braus G.H."/>
            <person name="Draht O."/>
            <person name="Busch S."/>
            <person name="D'Enfert C."/>
            <person name="Bouchier C."/>
            <person name="Goldman G.H."/>
            <person name="Bell-Pedersen D."/>
            <person name="Griffiths-Jones S."/>
            <person name="Doonan J.H."/>
            <person name="Yu J."/>
            <person name="Vienken K."/>
            <person name="Pain A."/>
            <person name="Freitag M."/>
            <person name="Selker E.U."/>
            <person name="Archer D.B."/>
            <person name="Penalva M.A."/>
            <person name="Oakley B.R."/>
            <person name="Momany M."/>
            <person name="Tanaka T."/>
            <person name="Kumagai T."/>
            <person name="Asai K."/>
            <person name="Machida M."/>
            <person name="Nierman W.C."/>
            <person name="Denning D.W."/>
            <person name="Caddick M.X."/>
            <person name="Hynes M."/>
            <person name="Paoletti M."/>
            <person name="Fischer R."/>
            <person name="Miller B.L."/>
            <person name="Dyer P.S."/>
            <person name="Sachs M.S."/>
            <person name="Osmani S.A."/>
            <person name="Birren B.W."/>
        </authorList>
    </citation>
    <scope>NUCLEOTIDE SEQUENCE [LARGE SCALE GENOMIC DNA]</scope>
    <source>
        <strain>FGSC A4 / ATCC 38163 / CBS 112.46 / NRRL 194 / M139</strain>
    </source>
</reference>
<reference key="2">
    <citation type="journal article" date="2009" name="Fungal Genet. Biol.">
        <title>The 2008 update of the Aspergillus nidulans genome annotation: a community effort.</title>
        <authorList>
            <person name="Wortman J.R."/>
            <person name="Gilsenan J.M."/>
            <person name="Joardar V."/>
            <person name="Deegan J."/>
            <person name="Clutterbuck J."/>
            <person name="Andersen M.R."/>
            <person name="Archer D."/>
            <person name="Bencina M."/>
            <person name="Braus G."/>
            <person name="Coutinho P."/>
            <person name="von Dohren H."/>
            <person name="Doonan J."/>
            <person name="Driessen A.J."/>
            <person name="Durek P."/>
            <person name="Espeso E."/>
            <person name="Fekete E."/>
            <person name="Flipphi M."/>
            <person name="Estrada C.G."/>
            <person name="Geysens S."/>
            <person name="Goldman G."/>
            <person name="de Groot P.W."/>
            <person name="Hansen K."/>
            <person name="Harris S.D."/>
            <person name="Heinekamp T."/>
            <person name="Helmstaedt K."/>
            <person name="Henrissat B."/>
            <person name="Hofmann G."/>
            <person name="Homan T."/>
            <person name="Horio T."/>
            <person name="Horiuchi H."/>
            <person name="James S."/>
            <person name="Jones M."/>
            <person name="Karaffa L."/>
            <person name="Karanyi Z."/>
            <person name="Kato M."/>
            <person name="Keller N."/>
            <person name="Kelly D.E."/>
            <person name="Kiel J.A."/>
            <person name="Kim J.M."/>
            <person name="van der Klei I.J."/>
            <person name="Klis F.M."/>
            <person name="Kovalchuk A."/>
            <person name="Krasevec N."/>
            <person name="Kubicek C.P."/>
            <person name="Liu B."/>
            <person name="Maccabe A."/>
            <person name="Meyer V."/>
            <person name="Mirabito P."/>
            <person name="Miskei M."/>
            <person name="Mos M."/>
            <person name="Mullins J."/>
            <person name="Nelson D.R."/>
            <person name="Nielsen J."/>
            <person name="Oakley B.R."/>
            <person name="Osmani S.A."/>
            <person name="Pakula T."/>
            <person name="Paszewski A."/>
            <person name="Paulsen I."/>
            <person name="Pilsyk S."/>
            <person name="Pocsi I."/>
            <person name="Punt P.J."/>
            <person name="Ram A.F."/>
            <person name="Ren Q."/>
            <person name="Robellet X."/>
            <person name="Robson G."/>
            <person name="Seiboth B."/>
            <person name="van Solingen P."/>
            <person name="Specht T."/>
            <person name="Sun J."/>
            <person name="Taheri-Talesh N."/>
            <person name="Takeshita N."/>
            <person name="Ussery D."/>
            <person name="vanKuyk P.A."/>
            <person name="Visser H."/>
            <person name="van de Vondervoort P.J."/>
            <person name="de Vries R.P."/>
            <person name="Walton J."/>
            <person name="Xiang X."/>
            <person name="Xiong Y."/>
            <person name="Zeng A.P."/>
            <person name="Brandt B.W."/>
            <person name="Cornell M.J."/>
            <person name="van den Hondel C.A."/>
            <person name="Visser J."/>
            <person name="Oliver S.G."/>
            <person name="Turner G."/>
        </authorList>
    </citation>
    <scope>GENOME REANNOTATION</scope>
    <source>
        <strain>FGSC A4 / ATCC 38163 / CBS 112.46 / NRRL 194 / M139</strain>
    </source>
</reference>
<reference key="3">
    <citation type="journal article" date="2007" name="Proc. Natl. Acad. Sci. U.S.A.">
        <title>An eight-subunit COP9 signalosome with an intact JAMM motif is required for fungal fruit body formation.</title>
        <authorList>
            <person name="Busch S."/>
            <person name="Schwier E.U."/>
            <person name="Nahlik K."/>
            <person name="Bayram O."/>
            <person name="Helmstaedt K."/>
            <person name="Draht O.W."/>
            <person name="Krappmann S."/>
            <person name="Valerius O."/>
            <person name="Lipscomb W.N."/>
            <person name="Braus G.H."/>
        </authorList>
    </citation>
    <scope>IDENTIFICATION IN THE CSN COMPLEX</scope>
    <scope>IDENTIFICATION BY MASS SPECTROMETRY</scope>
</reference>
<name>CSN8_EMENI</name>
<accession>P0C624</accession>
<accession>C8VMC3</accession>